<sequence>MKKVIILGSTGSIGTQTLDVIKNFRENFEIVGLTAYNNVELLSKQIREFNPKVVAVKDEDKANQLRENLKKNVEILTGSKGLQEIVKYDADLVVVAVEGIAGLIPTVTAIQRGKDIALANKEVLVTAGQIVMDLVKKKDITLLPVDSEHSAILQCLRGNDKKEVSRLILTASGGPFRGKKKEDLRKVTVNEALNHPNWKMGKKITIDSATLMNKGFEVIEAKWLFDISEDKIDVIVHPQSIIHSMVEYIDGSVIAQLAAADMRIPIQYALNYPTRNYINGINFLDFSLTTQLTFEKPDLETFRCLSLAYEALKIGGTMTTVLNAADEIAVSLFLNKKIEFLQIAEIIEESMKEHNNIQNPTLDDIINVDKEVKEKIAKKYMR</sequence>
<organism>
    <name type="scientific">Thermoanaerobacter pseudethanolicus (strain ATCC 33223 / 39E)</name>
    <name type="common">Clostridium thermohydrosulfuricum</name>
    <dbReference type="NCBI Taxonomy" id="340099"/>
    <lineage>
        <taxon>Bacteria</taxon>
        <taxon>Bacillati</taxon>
        <taxon>Bacillota</taxon>
        <taxon>Clostridia</taxon>
        <taxon>Thermoanaerobacterales</taxon>
        <taxon>Thermoanaerobacteraceae</taxon>
        <taxon>Thermoanaerobacter</taxon>
    </lineage>
</organism>
<proteinExistence type="inferred from homology"/>
<protein>
    <recommendedName>
        <fullName evidence="1">1-deoxy-D-xylulose 5-phosphate reductoisomerase</fullName>
        <shortName evidence="1">DXP reductoisomerase</shortName>
        <ecNumber evidence="1">1.1.1.267</ecNumber>
    </recommendedName>
    <alternativeName>
        <fullName evidence="1">1-deoxyxylulose-5-phosphate reductoisomerase</fullName>
    </alternativeName>
    <alternativeName>
        <fullName evidence="1">2-C-methyl-D-erythritol 4-phosphate synthase</fullName>
    </alternativeName>
</protein>
<name>DXR_THEP3</name>
<dbReference type="EC" id="1.1.1.267" evidence="1"/>
<dbReference type="EMBL" id="CP000924">
    <property type="protein sequence ID" value="ABY94872.1"/>
    <property type="molecule type" value="Genomic_DNA"/>
</dbReference>
<dbReference type="RefSeq" id="WP_004396209.1">
    <property type="nucleotide sequence ID" value="NC_010321.1"/>
</dbReference>
<dbReference type="SMR" id="B0K9Q9"/>
<dbReference type="STRING" id="340099.Teth39_1218"/>
<dbReference type="KEGG" id="tpd:Teth39_1218"/>
<dbReference type="eggNOG" id="COG0743">
    <property type="taxonomic scope" value="Bacteria"/>
</dbReference>
<dbReference type="HOGENOM" id="CLU_035714_4_0_9"/>
<dbReference type="UniPathway" id="UPA00056">
    <property type="reaction ID" value="UER00092"/>
</dbReference>
<dbReference type="Proteomes" id="UP000002156">
    <property type="component" value="Chromosome"/>
</dbReference>
<dbReference type="GO" id="GO:0030604">
    <property type="term" value="F:1-deoxy-D-xylulose-5-phosphate reductoisomerase activity"/>
    <property type="evidence" value="ECO:0007669"/>
    <property type="project" value="UniProtKB-UniRule"/>
</dbReference>
<dbReference type="GO" id="GO:0030145">
    <property type="term" value="F:manganese ion binding"/>
    <property type="evidence" value="ECO:0007669"/>
    <property type="project" value="TreeGrafter"/>
</dbReference>
<dbReference type="GO" id="GO:0070402">
    <property type="term" value="F:NADPH binding"/>
    <property type="evidence" value="ECO:0007669"/>
    <property type="project" value="InterPro"/>
</dbReference>
<dbReference type="GO" id="GO:0051484">
    <property type="term" value="P:isopentenyl diphosphate biosynthetic process, methylerythritol 4-phosphate pathway involved in terpenoid biosynthetic process"/>
    <property type="evidence" value="ECO:0007669"/>
    <property type="project" value="TreeGrafter"/>
</dbReference>
<dbReference type="FunFam" id="3.40.50.720:FF:000045">
    <property type="entry name" value="1-deoxy-D-xylulose 5-phosphate reductoisomerase"/>
    <property type="match status" value="1"/>
</dbReference>
<dbReference type="Gene3D" id="1.10.1740.10">
    <property type="match status" value="1"/>
</dbReference>
<dbReference type="Gene3D" id="3.40.50.720">
    <property type="entry name" value="NAD(P)-binding Rossmann-like Domain"/>
    <property type="match status" value="1"/>
</dbReference>
<dbReference type="HAMAP" id="MF_00183">
    <property type="entry name" value="DXP_reductoisom"/>
    <property type="match status" value="1"/>
</dbReference>
<dbReference type="InterPro" id="IPR003821">
    <property type="entry name" value="DXP_reductoisomerase"/>
</dbReference>
<dbReference type="InterPro" id="IPR013644">
    <property type="entry name" value="DXP_reductoisomerase_C"/>
</dbReference>
<dbReference type="InterPro" id="IPR013512">
    <property type="entry name" value="DXP_reductoisomerase_N"/>
</dbReference>
<dbReference type="InterPro" id="IPR026877">
    <property type="entry name" value="DXPR_C"/>
</dbReference>
<dbReference type="InterPro" id="IPR036169">
    <property type="entry name" value="DXPR_C_sf"/>
</dbReference>
<dbReference type="InterPro" id="IPR036291">
    <property type="entry name" value="NAD(P)-bd_dom_sf"/>
</dbReference>
<dbReference type="NCBIfam" id="TIGR00243">
    <property type="entry name" value="Dxr"/>
    <property type="match status" value="1"/>
</dbReference>
<dbReference type="NCBIfam" id="NF009114">
    <property type="entry name" value="PRK12464.1"/>
    <property type="match status" value="1"/>
</dbReference>
<dbReference type="PANTHER" id="PTHR30525">
    <property type="entry name" value="1-DEOXY-D-XYLULOSE 5-PHOSPHATE REDUCTOISOMERASE"/>
    <property type="match status" value="1"/>
</dbReference>
<dbReference type="PANTHER" id="PTHR30525:SF0">
    <property type="entry name" value="1-DEOXY-D-XYLULOSE 5-PHOSPHATE REDUCTOISOMERASE, CHLOROPLASTIC"/>
    <property type="match status" value="1"/>
</dbReference>
<dbReference type="Pfam" id="PF08436">
    <property type="entry name" value="DXP_redisom_C"/>
    <property type="match status" value="1"/>
</dbReference>
<dbReference type="Pfam" id="PF02670">
    <property type="entry name" value="DXP_reductoisom"/>
    <property type="match status" value="1"/>
</dbReference>
<dbReference type="Pfam" id="PF13288">
    <property type="entry name" value="DXPR_C"/>
    <property type="match status" value="1"/>
</dbReference>
<dbReference type="PIRSF" id="PIRSF006205">
    <property type="entry name" value="Dxp_reductismrs"/>
    <property type="match status" value="1"/>
</dbReference>
<dbReference type="SUPFAM" id="SSF69055">
    <property type="entry name" value="1-deoxy-D-xylulose-5-phosphate reductoisomerase, C-terminal domain"/>
    <property type="match status" value="1"/>
</dbReference>
<dbReference type="SUPFAM" id="SSF55347">
    <property type="entry name" value="Glyceraldehyde-3-phosphate dehydrogenase-like, C-terminal domain"/>
    <property type="match status" value="1"/>
</dbReference>
<dbReference type="SUPFAM" id="SSF51735">
    <property type="entry name" value="NAD(P)-binding Rossmann-fold domains"/>
    <property type="match status" value="1"/>
</dbReference>
<keyword id="KW-0414">Isoprene biosynthesis</keyword>
<keyword id="KW-0464">Manganese</keyword>
<keyword id="KW-0479">Metal-binding</keyword>
<keyword id="KW-0521">NADP</keyword>
<keyword id="KW-0560">Oxidoreductase</keyword>
<keyword id="KW-1185">Reference proteome</keyword>
<reference key="1">
    <citation type="submission" date="2008-01" db="EMBL/GenBank/DDBJ databases">
        <title>Complete sequence of Thermoanaerobacter pseudethanolicus 39E.</title>
        <authorList>
            <person name="Copeland A."/>
            <person name="Lucas S."/>
            <person name="Lapidus A."/>
            <person name="Barry K."/>
            <person name="Glavina del Rio T."/>
            <person name="Dalin E."/>
            <person name="Tice H."/>
            <person name="Pitluck S."/>
            <person name="Bruce D."/>
            <person name="Goodwin L."/>
            <person name="Saunders E."/>
            <person name="Brettin T."/>
            <person name="Detter J.C."/>
            <person name="Han C."/>
            <person name="Schmutz J."/>
            <person name="Larimer F."/>
            <person name="Land M."/>
            <person name="Hauser L."/>
            <person name="Kyrpides N."/>
            <person name="Lykidis A."/>
            <person name="Hemme C."/>
            <person name="Fields M.W."/>
            <person name="He Z."/>
            <person name="Zhou J."/>
            <person name="Richardson P."/>
        </authorList>
    </citation>
    <scope>NUCLEOTIDE SEQUENCE [LARGE SCALE GENOMIC DNA]</scope>
    <source>
        <strain>ATCC 33223 / DSM 2355 / 39E</strain>
    </source>
</reference>
<comment type="function">
    <text evidence="1">Catalyzes the NADPH-dependent rearrangement and reduction of 1-deoxy-D-xylulose-5-phosphate (DXP) to 2-C-methyl-D-erythritol 4-phosphate (MEP).</text>
</comment>
<comment type="catalytic activity">
    <reaction evidence="1">
        <text>2-C-methyl-D-erythritol 4-phosphate + NADP(+) = 1-deoxy-D-xylulose 5-phosphate + NADPH + H(+)</text>
        <dbReference type="Rhea" id="RHEA:13717"/>
        <dbReference type="ChEBI" id="CHEBI:15378"/>
        <dbReference type="ChEBI" id="CHEBI:57783"/>
        <dbReference type="ChEBI" id="CHEBI:57792"/>
        <dbReference type="ChEBI" id="CHEBI:58262"/>
        <dbReference type="ChEBI" id="CHEBI:58349"/>
        <dbReference type="EC" id="1.1.1.267"/>
    </reaction>
    <physiologicalReaction direction="right-to-left" evidence="1">
        <dbReference type="Rhea" id="RHEA:13719"/>
    </physiologicalReaction>
</comment>
<comment type="cofactor">
    <cofactor evidence="1">
        <name>Mg(2+)</name>
        <dbReference type="ChEBI" id="CHEBI:18420"/>
    </cofactor>
    <cofactor evidence="1">
        <name>Mn(2+)</name>
        <dbReference type="ChEBI" id="CHEBI:29035"/>
    </cofactor>
</comment>
<comment type="pathway">
    <text evidence="1">Isoprenoid biosynthesis; isopentenyl diphosphate biosynthesis via DXP pathway; isopentenyl diphosphate from 1-deoxy-D-xylulose 5-phosphate: step 1/6.</text>
</comment>
<comment type="similarity">
    <text evidence="1">Belongs to the DXR family.</text>
</comment>
<accession>B0K9Q9</accession>
<gene>
    <name evidence="1" type="primary">dxr</name>
    <name type="ordered locus">Teth39_1218</name>
</gene>
<evidence type="ECO:0000255" key="1">
    <source>
        <dbReference type="HAMAP-Rule" id="MF_00183"/>
    </source>
</evidence>
<feature type="chain" id="PRO_1000098520" description="1-deoxy-D-xylulose 5-phosphate reductoisomerase">
    <location>
        <begin position="1"/>
        <end position="382"/>
    </location>
</feature>
<feature type="binding site" evidence="1">
    <location>
        <position position="10"/>
    </location>
    <ligand>
        <name>NADPH</name>
        <dbReference type="ChEBI" id="CHEBI:57783"/>
    </ligand>
</feature>
<feature type="binding site" evidence="1">
    <location>
        <position position="11"/>
    </location>
    <ligand>
        <name>NADPH</name>
        <dbReference type="ChEBI" id="CHEBI:57783"/>
    </ligand>
</feature>
<feature type="binding site" evidence="1">
    <location>
        <position position="12"/>
    </location>
    <ligand>
        <name>NADPH</name>
        <dbReference type="ChEBI" id="CHEBI:57783"/>
    </ligand>
</feature>
<feature type="binding site" evidence="1">
    <location>
        <position position="13"/>
    </location>
    <ligand>
        <name>NADPH</name>
        <dbReference type="ChEBI" id="CHEBI:57783"/>
    </ligand>
</feature>
<feature type="binding site" evidence="1">
    <location>
        <position position="38"/>
    </location>
    <ligand>
        <name>NADPH</name>
        <dbReference type="ChEBI" id="CHEBI:57783"/>
    </ligand>
</feature>
<feature type="binding site" evidence="1">
    <location>
        <position position="120"/>
    </location>
    <ligand>
        <name>NADPH</name>
        <dbReference type="ChEBI" id="CHEBI:57783"/>
    </ligand>
</feature>
<feature type="binding site" evidence="1">
    <location>
        <position position="121"/>
    </location>
    <ligand>
        <name>1-deoxy-D-xylulose 5-phosphate</name>
        <dbReference type="ChEBI" id="CHEBI:57792"/>
    </ligand>
</feature>
<feature type="binding site" evidence="1">
    <location>
        <position position="122"/>
    </location>
    <ligand>
        <name>NADPH</name>
        <dbReference type="ChEBI" id="CHEBI:57783"/>
    </ligand>
</feature>
<feature type="binding site" evidence="1">
    <location>
        <position position="146"/>
    </location>
    <ligand>
        <name>Mn(2+)</name>
        <dbReference type="ChEBI" id="CHEBI:29035"/>
    </ligand>
</feature>
<feature type="binding site" evidence="1">
    <location>
        <position position="147"/>
    </location>
    <ligand>
        <name>1-deoxy-D-xylulose 5-phosphate</name>
        <dbReference type="ChEBI" id="CHEBI:57792"/>
    </ligand>
</feature>
<feature type="binding site" evidence="1">
    <location>
        <position position="148"/>
    </location>
    <ligand>
        <name>1-deoxy-D-xylulose 5-phosphate</name>
        <dbReference type="ChEBI" id="CHEBI:57792"/>
    </ligand>
</feature>
<feature type="binding site" evidence="1">
    <location>
        <position position="148"/>
    </location>
    <ligand>
        <name>Mn(2+)</name>
        <dbReference type="ChEBI" id="CHEBI:29035"/>
    </ligand>
</feature>
<feature type="binding site" evidence="1">
    <location>
        <position position="172"/>
    </location>
    <ligand>
        <name>1-deoxy-D-xylulose 5-phosphate</name>
        <dbReference type="ChEBI" id="CHEBI:57792"/>
    </ligand>
</feature>
<feature type="binding site" evidence="1">
    <location>
        <position position="195"/>
    </location>
    <ligand>
        <name>1-deoxy-D-xylulose 5-phosphate</name>
        <dbReference type="ChEBI" id="CHEBI:57792"/>
    </ligand>
</feature>
<feature type="binding site" evidence="1">
    <location>
        <position position="201"/>
    </location>
    <ligand>
        <name>NADPH</name>
        <dbReference type="ChEBI" id="CHEBI:57783"/>
    </ligand>
</feature>
<feature type="binding site" evidence="1">
    <location>
        <position position="208"/>
    </location>
    <ligand>
        <name>1-deoxy-D-xylulose 5-phosphate</name>
        <dbReference type="ChEBI" id="CHEBI:57792"/>
    </ligand>
</feature>
<feature type="binding site" evidence="1">
    <location>
        <position position="213"/>
    </location>
    <ligand>
        <name>1-deoxy-D-xylulose 5-phosphate</name>
        <dbReference type="ChEBI" id="CHEBI:57792"/>
    </ligand>
</feature>
<feature type="binding site" evidence="1">
    <location>
        <position position="214"/>
    </location>
    <ligand>
        <name>1-deoxy-D-xylulose 5-phosphate</name>
        <dbReference type="ChEBI" id="CHEBI:57792"/>
    </ligand>
</feature>
<feature type="binding site" evidence="1">
    <location>
        <position position="217"/>
    </location>
    <ligand>
        <name>1-deoxy-D-xylulose 5-phosphate</name>
        <dbReference type="ChEBI" id="CHEBI:57792"/>
    </ligand>
</feature>
<feature type="binding site" evidence="1">
    <location>
        <position position="217"/>
    </location>
    <ligand>
        <name>Mn(2+)</name>
        <dbReference type="ChEBI" id="CHEBI:29035"/>
    </ligand>
</feature>